<keyword id="KW-0193">Cuticle</keyword>
<keyword id="KW-1185">Reference proteome</keyword>
<keyword id="KW-0677">Repeat</keyword>
<keyword id="KW-0732">Signal</keyword>
<sequence>MKSMIVVACLALACGAHASGWAGPPANIALSQDGRNILDTPEVAQARAAHISALQQASKNNPNPNDDGSYDPRWDNEEYWQQAEGKWNGAPAPAWNAAPAPSWNGAHAAAPSWNAAPAHSWNAAGSAPAPVAETPEVAQARAAHLAALSAAKSAAPAQQQWNAPAHQDWNAPAHQDWNAPAHQDWNAPAHQSWNGAPSWQSGAPAHQPANIRLANDGSGILDTPEVAAARAAHLAAHAQAAHSAPAHAPQQHW</sequence>
<feature type="signal peptide" evidence="1">
    <location>
        <begin position="1"/>
        <end position="18"/>
    </location>
</feature>
<feature type="chain" id="PRO_0000006403" description="Pupal cuticle protein">
    <location>
        <begin position="19"/>
        <end position="253"/>
    </location>
</feature>
<feature type="repeat" description="1">
    <location>
        <begin position="97"/>
        <end position="100"/>
    </location>
</feature>
<feature type="repeat" description="2">
    <location>
        <begin position="115"/>
        <end position="118"/>
    </location>
</feature>
<feature type="repeat" description="3">
    <location>
        <begin position="154"/>
        <end position="157"/>
    </location>
</feature>
<feature type="region of interest" description="Disordered" evidence="2">
    <location>
        <begin position="54"/>
        <end position="74"/>
    </location>
</feature>
<feature type="region of interest" description="Disordered" evidence="2">
    <location>
        <begin position="155"/>
        <end position="178"/>
    </location>
</feature>
<feature type="region of interest" description="Disordered" evidence="2">
    <location>
        <begin position="187"/>
        <end position="206"/>
    </location>
</feature>
<feature type="compositionally biased region" description="Polar residues" evidence="2">
    <location>
        <begin position="54"/>
        <end position="66"/>
    </location>
</feature>
<feature type="compositionally biased region" description="Low complexity" evidence="2">
    <location>
        <begin position="155"/>
        <end position="167"/>
    </location>
</feature>
<feature type="compositionally biased region" description="Polar residues" evidence="2">
    <location>
        <begin position="189"/>
        <end position="201"/>
    </location>
</feature>
<name>CUPP_BOMMO</name>
<dbReference type="EMBL" id="X68930">
    <property type="protein sequence ID" value="CAA48756.1"/>
    <property type="molecule type" value="Genomic_DNA"/>
</dbReference>
<dbReference type="EMBL" id="X68931">
    <property type="protein sequence ID" value="CAA48756.1"/>
    <property type="status" value="JOINED"/>
    <property type="molecule type" value="Genomic_DNA"/>
</dbReference>
<dbReference type="PIR" id="S28943">
    <property type="entry name" value="S28943"/>
</dbReference>
<dbReference type="RefSeq" id="NP_001119729.1">
    <property type="nucleotide sequence ID" value="NM_001126257.2"/>
</dbReference>
<dbReference type="STRING" id="7091.P42852"/>
<dbReference type="EnsemblMetazoa" id="NM_001126257.2">
    <property type="protein sequence ID" value="NP_001119729.1"/>
    <property type="gene ID" value="GeneID_100146103"/>
</dbReference>
<dbReference type="GeneID" id="100146103"/>
<dbReference type="KEGG" id="bmor:100146103"/>
<dbReference type="CTD" id="100146103"/>
<dbReference type="InParanoid" id="P42852"/>
<dbReference type="OrthoDB" id="617755at7088"/>
<dbReference type="Proteomes" id="UP000005204">
    <property type="component" value="Unassembled WGS sequence"/>
</dbReference>
<dbReference type="GO" id="GO:0042302">
    <property type="term" value="F:structural constituent of cuticle"/>
    <property type="evidence" value="ECO:0007669"/>
    <property type="project" value="UniProtKB-KW"/>
</dbReference>
<protein>
    <recommendedName>
        <fullName>Pupal cuticle protein</fullName>
    </recommendedName>
</protein>
<accession>P42852</accession>
<organism>
    <name type="scientific">Bombyx mori</name>
    <name type="common">Silk moth</name>
    <dbReference type="NCBI Taxonomy" id="7091"/>
    <lineage>
        <taxon>Eukaryota</taxon>
        <taxon>Metazoa</taxon>
        <taxon>Ecdysozoa</taxon>
        <taxon>Arthropoda</taxon>
        <taxon>Hexapoda</taxon>
        <taxon>Insecta</taxon>
        <taxon>Pterygota</taxon>
        <taxon>Neoptera</taxon>
        <taxon>Endopterygota</taxon>
        <taxon>Lepidoptera</taxon>
        <taxon>Glossata</taxon>
        <taxon>Ditrysia</taxon>
        <taxon>Bombycoidea</taxon>
        <taxon>Bombycidae</taxon>
        <taxon>Bombycinae</taxon>
        <taxon>Bombyx</taxon>
    </lineage>
</organism>
<comment type="function">
    <text>Component of the cuticle of the pupae of silk moth.</text>
</comment>
<comment type="developmental stage">
    <text>The level of PCP rises sharply at larval-pupal transformation.</text>
</comment>
<comment type="domain">
    <text>The tetrapeptide (A-A-P-[AV]) repeats found throughout the protein are also present in many proteins constituting the protective envelope of other species.</text>
</comment>
<reference key="1">
    <citation type="journal article" date="1990" name="Insect Biochem.">
        <title>Structure and expression of mRNA for a pupal cuticle protein of the silkworm, Bombyx mori.</title>
        <authorList>
            <person name="Nakato H."/>
            <person name="Toriyama M."/>
            <person name="Izumi S."/>
            <person name="Tomino S."/>
        </authorList>
    </citation>
    <scope>NUCLEOTIDE SEQUENCE [GENOMIC DNA]</scope>
    <source>
        <strain>Tokai X Asahi</strain>
        <tissue>Fat body</tissue>
    </source>
</reference>
<reference key="2">
    <citation type="journal article" date="1992" name="Biochim. Biophys. Acta">
        <title>Structure and expression of gene coding for a pupal cuticle protein of Bombyx mori.</title>
        <authorList>
            <person name="Nakato H."/>
            <person name="Izumi S."/>
            <person name="Tomino S."/>
        </authorList>
    </citation>
    <scope>NUCLEOTIDE SEQUENCE [GENOMIC DNA]</scope>
    <source>
        <strain>Tokai X Asahi</strain>
        <tissue>Fat body</tissue>
    </source>
</reference>
<gene>
    <name type="primary">PCP</name>
</gene>
<proteinExistence type="evidence at transcript level"/>
<evidence type="ECO:0000255" key="1"/>
<evidence type="ECO:0000256" key="2">
    <source>
        <dbReference type="SAM" id="MobiDB-lite"/>
    </source>
</evidence>